<reference evidence="2" key="1">
    <citation type="journal article" date="2009" name="Rapid Commun. Mass Spectrom.">
        <title>The host-defence skin peptide profiles of Peron's Tree Frog Litoria peronii in winter and summer. Sequence determination by electrospray mass spectrometry and activities of the peptides.</title>
        <authorList>
            <person name="Bilusich D."/>
            <person name="Jackway R.J."/>
            <person name="Musgrave I.F."/>
            <person name="Tyler M.J."/>
            <person name="Bowie J.H."/>
        </authorList>
    </citation>
    <scope>PROTEIN SEQUENCE</scope>
    <scope>FUNCTION</scope>
    <scope>SUBCELLULAR LOCATION</scope>
    <scope>TISSUE SPECIFICITY</scope>
    <scope>DEVELOPMENTAL STAGE</scope>
    <scope>MASS SPECTROMETRY</scope>
    <scope>AMIDATION AT GLY-13</scope>
    <source>
        <tissue evidence="1">Skin secretion</tissue>
    </source>
</reference>
<feature type="peptide" id="PRO_0000394179" description="Peroniin-1.1a">
    <location>
        <begin position="1"/>
        <end position="13"/>
    </location>
</feature>
<feature type="modified residue" description="Glycine amide" evidence="1">
    <location>
        <position position="13"/>
    </location>
</feature>
<name>PE11A_LITPE</name>
<keyword id="KW-0027">Amidation</keyword>
<keyword id="KW-0878">Amphibian defense peptide</keyword>
<keyword id="KW-0903">Direct protein sequencing</keyword>
<keyword id="KW-0964">Secreted</keyword>
<dbReference type="GO" id="GO:0005576">
    <property type="term" value="C:extracellular region"/>
    <property type="evidence" value="ECO:0000314"/>
    <property type="project" value="UniProtKB"/>
</dbReference>
<dbReference type="GO" id="GO:0006952">
    <property type="term" value="P:defense response"/>
    <property type="evidence" value="ECO:0007669"/>
    <property type="project" value="UniProtKB-KW"/>
</dbReference>
<dbReference type="GO" id="GO:0045987">
    <property type="term" value="P:positive regulation of smooth muscle contraction"/>
    <property type="evidence" value="ECO:0000314"/>
    <property type="project" value="UniProtKB"/>
</dbReference>
<accession>P86488</accession>
<evidence type="ECO:0000269" key="1">
    <source>
    </source>
</evidence>
<evidence type="ECO:0000305" key="2"/>
<organism>
    <name type="scientific">Litoria peronii</name>
    <name type="common">Emerald spotted tree frog</name>
    <name type="synonym">Hyla peronii</name>
    <dbReference type="NCBI Taxonomy" id="317363"/>
    <lineage>
        <taxon>Eukaryota</taxon>
        <taxon>Metazoa</taxon>
        <taxon>Chordata</taxon>
        <taxon>Craniata</taxon>
        <taxon>Vertebrata</taxon>
        <taxon>Euteleostomi</taxon>
        <taxon>Amphibia</taxon>
        <taxon>Batrachia</taxon>
        <taxon>Anura</taxon>
        <taxon>Neobatrachia</taxon>
        <taxon>Hyloidea</taxon>
        <taxon>Hylidae</taxon>
        <taxon>Pelodryadinae</taxon>
        <taxon>Litoria</taxon>
    </lineage>
</organism>
<proteinExistence type="evidence at protein level"/>
<comment type="function">
    <text evidence="1">Induces contraction of intestinal smooth muscle in isolated guinea pig ileum.</text>
</comment>
<comment type="subcellular location">
    <subcellularLocation>
        <location evidence="1">Secreted</location>
    </subcellularLocation>
</comment>
<comment type="tissue specificity">
    <text evidence="1">Expressed by the skin dorsal glands.</text>
</comment>
<comment type="developmental stage">
    <text evidence="1">Expressed during summer.</text>
</comment>
<comment type="mass spectrometry" mass="1567.0" method="Electrospray" evidence="1"/>
<comment type="similarity">
    <text evidence="2">Belongs to the frog skin active peptide (FSAP) family. Peroniin subfamily.</text>
</comment>
<sequence length="13" mass="1572">DAQEKRQPWLPFG</sequence>
<protein>
    <recommendedName>
        <fullName>Peroniin-1.1a</fullName>
    </recommendedName>
</protein>